<evidence type="ECO:0000255" key="1">
    <source>
        <dbReference type="HAMAP-Rule" id="MF_01227"/>
    </source>
</evidence>
<comment type="function">
    <text evidence="1">Catalyzes the ATP-dependent amination of UTP to CTP with either L-glutamine or ammonia as the source of nitrogen. Regulates intracellular CTP levels through interactions with the four ribonucleotide triphosphates.</text>
</comment>
<comment type="catalytic activity">
    <reaction evidence="1">
        <text>UTP + L-glutamine + ATP + H2O = CTP + L-glutamate + ADP + phosphate + 2 H(+)</text>
        <dbReference type="Rhea" id="RHEA:26426"/>
        <dbReference type="ChEBI" id="CHEBI:15377"/>
        <dbReference type="ChEBI" id="CHEBI:15378"/>
        <dbReference type="ChEBI" id="CHEBI:29985"/>
        <dbReference type="ChEBI" id="CHEBI:30616"/>
        <dbReference type="ChEBI" id="CHEBI:37563"/>
        <dbReference type="ChEBI" id="CHEBI:43474"/>
        <dbReference type="ChEBI" id="CHEBI:46398"/>
        <dbReference type="ChEBI" id="CHEBI:58359"/>
        <dbReference type="ChEBI" id="CHEBI:456216"/>
        <dbReference type="EC" id="6.3.4.2"/>
    </reaction>
</comment>
<comment type="catalytic activity">
    <reaction evidence="1">
        <text>L-glutamine + H2O = L-glutamate + NH4(+)</text>
        <dbReference type="Rhea" id="RHEA:15889"/>
        <dbReference type="ChEBI" id="CHEBI:15377"/>
        <dbReference type="ChEBI" id="CHEBI:28938"/>
        <dbReference type="ChEBI" id="CHEBI:29985"/>
        <dbReference type="ChEBI" id="CHEBI:58359"/>
    </reaction>
</comment>
<comment type="catalytic activity">
    <reaction evidence="1">
        <text>UTP + NH4(+) + ATP = CTP + ADP + phosphate + 2 H(+)</text>
        <dbReference type="Rhea" id="RHEA:16597"/>
        <dbReference type="ChEBI" id="CHEBI:15378"/>
        <dbReference type="ChEBI" id="CHEBI:28938"/>
        <dbReference type="ChEBI" id="CHEBI:30616"/>
        <dbReference type="ChEBI" id="CHEBI:37563"/>
        <dbReference type="ChEBI" id="CHEBI:43474"/>
        <dbReference type="ChEBI" id="CHEBI:46398"/>
        <dbReference type="ChEBI" id="CHEBI:456216"/>
    </reaction>
</comment>
<comment type="activity regulation">
    <text evidence="1">Allosterically activated by GTP, when glutamine is the substrate; GTP has no effect on the reaction when ammonia is the substrate. The allosteric effector GTP functions by stabilizing the protein conformation that binds the tetrahedral intermediate(s) formed during glutamine hydrolysis. Inhibited by the product CTP, via allosteric rather than competitive inhibition.</text>
</comment>
<comment type="pathway">
    <text evidence="1">Pyrimidine metabolism; CTP biosynthesis via de novo pathway; CTP from UDP: step 2/2.</text>
</comment>
<comment type="subunit">
    <text evidence="1">Homotetramer.</text>
</comment>
<comment type="miscellaneous">
    <text evidence="1">CTPSs have evolved a hybrid strategy for distinguishing between UTP and CTP. The overlapping regions of the product feedback inhibitory and substrate sites recognize a common feature in both compounds, the triphosphate moiety. To differentiate isosteric substrate and product pyrimidine rings, an additional pocket far from the expected kinase/ligase catalytic site, specifically recognizes the cytosine and ribose portions of the product inhibitor.</text>
</comment>
<comment type="similarity">
    <text evidence="1">Belongs to the CTP synthase family.</text>
</comment>
<feature type="chain" id="PRO_0000266170" description="CTP synthase">
    <location>
        <begin position="1"/>
        <end position="534"/>
    </location>
</feature>
<feature type="domain" description="Glutamine amidotransferase type-1" evidence="1">
    <location>
        <begin position="291"/>
        <end position="533"/>
    </location>
</feature>
<feature type="region of interest" description="Amidoligase domain" evidence="1">
    <location>
        <begin position="1"/>
        <end position="266"/>
    </location>
</feature>
<feature type="active site" description="Nucleophile; for glutamine hydrolysis" evidence="1">
    <location>
        <position position="380"/>
    </location>
</feature>
<feature type="active site" evidence="1">
    <location>
        <position position="506"/>
    </location>
</feature>
<feature type="active site" evidence="1">
    <location>
        <position position="508"/>
    </location>
</feature>
<feature type="binding site" evidence="1">
    <location>
        <position position="14"/>
    </location>
    <ligand>
        <name>CTP</name>
        <dbReference type="ChEBI" id="CHEBI:37563"/>
        <note>allosteric inhibitor</note>
    </ligand>
</feature>
<feature type="binding site" evidence="1">
    <location>
        <position position="14"/>
    </location>
    <ligand>
        <name>UTP</name>
        <dbReference type="ChEBI" id="CHEBI:46398"/>
    </ligand>
</feature>
<feature type="binding site" evidence="1">
    <location>
        <begin position="15"/>
        <end position="20"/>
    </location>
    <ligand>
        <name>ATP</name>
        <dbReference type="ChEBI" id="CHEBI:30616"/>
    </ligand>
</feature>
<feature type="binding site" evidence="1">
    <location>
        <position position="72"/>
    </location>
    <ligand>
        <name>ATP</name>
        <dbReference type="ChEBI" id="CHEBI:30616"/>
    </ligand>
</feature>
<feature type="binding site" evidence="1">
    <location>
        <position position="72"/>
    </location>
    <ligand>
        <name>Mg(2+)</name>
        <dbReference type="ChEBI" id="CHEBI:18420"/>
    </ligand>
</feature>
<feature type="binding site" evidence="1">
    <location>
        <position position="140"/>
    </location>
    <ligand>
        <name>Mg(2+)</name>
        <dbReference type="ChEBI" id="CHEBI:18420"/>
    </ligand>
</feature>
<feature type="binding site" evidence="1">
    <location>
        <begin position="147"/>
        <end position="149"/>
    </location>
    <ligand>
        <name>CTP</name>
        <dbReference type="ChEBI" id="CHEBI:37563"/>
        <note>allosteric inhibitor</note>
    </ligand>
</feature>
<feature type="binding site" evidence="1">
    <location>
        <begin position="187"/>
        <end position="192"/>
    </location>
    <ligand>
        <name>CTP</name>
        <dbReference type="ChEBI" id="CHEBI:37563"/>
        <note>allosteric inhibitor</note>
    </ligand>
</feature>
<feature type="binding site" evidence="1">
    <location>
        <begin position="187"/>
        <end position="192"/>
    </location>
    <ligand>
        <name>UTP</name>
        <dbReference type="ChEBI" id="CHEBI:46398"/>
    </ligand>
</feature>
<feature type="binding site" evidence="1">
    <location>
        <position position="223"/>
    </location>
    <ligand>
        <name>CTP</name>
        <dbReference type="ChEBI" id="CHEBI:37563"/>
        <note>allosteric inhibitor</note>
    </ligand>
</feature>
<feature type="binding site" evidence="1">
    <location>
        <position position="223"/>
    </location>
    <ligand>
        <name>UTP</name>
        <dbReference type="ChEBI" id="CHEBI:46398"/>
    </ligand>
</feature>
<feature type="binding site" evidence="1">
    <location>
        <begin position="239"/>
        <end position="241"/>
    </location>
    <ligand>
        <name>ATP</name>
        <dbReference type="ChEBI" id="CHEBI:30616"/>
    </ligand>
</feature>
<feature type="binding site" evidence="1">
    <location>
        <position position="353"/>
    </location>
    <ligand>
        <name>L-glutamine</name>
        <dbReference type="ChEBI" id="CHEBI:58359"/>
    </ligand>
</feature>
<feature type="binding site" evidence="1">
    <location>
        <begin position="381"/>
        <end position="384"/>
    </location>
    <ligand>
        <name>L-glutamine</name>
        <dbReference type="ChEBI" id="CHEBI:58359"/>
    </ligand>
</feature>
<feature type="binding site" evidence="1">
    <location>
        <position position="404"/>
    </location>
    <ligand>
        <name>L-glutamine</name>
        <dbReference type="ChEBI" id="CHEBI:58359"/>
    </ligand>
</feature>
<feature type="binding site" evidence="1">
    <location>
        <position position="461"/>
    </location>
    <ligand>
        <name>L-glutamine</name>
        <dbReference type="ChEBI" id="CHEBI:58359"/>
    </ligand>
</feature>
<protein>
    <recommendedName>
        <fullName evidence="1">CTP synthase</fullName>
        <ecNumber evidence="1">6.3.4.2</ecNumber>
    </recommendedName>
    <alternativeName>
        <fullName evidence="1">Cytidine 5'-triphosphate synthase</fullName>
    </alternativeName>
    <alternativeName>
        <fullName evidence="1">Cytidine triphosphate synthetase</fullName>
        <shortName evidence="1">CTP synthetase</shortName>
        <shortName evidence="1">CTPS</shortName>
    </alternativeName>
    <alternativeName>
        <fullName evidence="1">UTP--ammonia ligase</fullName>
    </alternativeName>
</protein>
<keyword id="KW-0067">ATP-binding</keyword>
<keyword id="KW-0315">Glutamine amidotransferase</keyword>
<keyword id="KW-0436">Ligase</keyword>
<keyword id="KW-0460">Magnesium</keyword>
<keyword id="KW-0479">Metal-binding</keyword>
<keyword id="KW-0547">Nucleotide-binding</keyword>
<keyword id="KW-0665">Pyrimidine biosynthesis</keyword>
<keyword id="KW-1185">Reference proteome</keyword>
<gene>
    <name evidence="1" type="primary">pyrG</name>
    <name type="ordered locus">Pcar_1945</name>
</gene>
<reference key="1">
    <citation type="submission" date="2005-10" db="EMBL/GenBank/DDBJ databases">
        <title>Complete sequence of Pelobacter carbinolicus DSM 2380.</title>
        <authorList>
            <person name="Copeland A."/>
            <person name="Lucas S."/>
            <person name="Lapidus A."/>
            <person name="Barry K."/>
            <person name="Detter J.C."/>
            <person name="Glavina T."/>
            <person name="Hammon N."/>
            <person name="Israni S."/>
            <person name="Pitluck S."/>
            <person name="Chertkov O."/>
            <person name="Schmutz J."/>
            <person name="Larimer F."/>
            <person name="Land M."/>
            <person name="Kyrpides N."/>
            <person name="Ivanova N."/>
            <person name="Richardson P."/>
        </authorList>
    </citation>
    <scope>NUCLEOTIDE SEQUENCE [LARGE SCALE GENOMIC DNA]</scope>
    <source>
        <strain>DSM 2380 / NBRC 103641 / GraBd1</strain>
    </source>
</reference>
<sequence length="534" mass="59884">MKTKFLFITGGVVSSLGKGLAAASIGALMEARGLRVSMQKMDPYINVDPGTMSPFQHGEVFVTDDGAETDLDLGHYERYTSARLSQKSNFTTGQVYDSVIRKERRGDYLGGTVQVIPHITNEIKAKILANSKDVDVAIVEVGGTVGDIESLPFLEAIRQFRVERGRENVLYLHLTLVPYIPTAGELKTKPTQHSVKELREIGIQPDILLCRCDREIPRDMKAKIALFCNVSEEAVVTARDVECIYEVPIAYHEEGLDERIIDYLNIWTKAPDLTDWERIVRRFKEPESETTIAIVGKYVELTESYKSLSEALIHGGIANNCRVNLIYVDSESLERHGVGDTFKDVDGILVPGGFGHRGSEGKIAAIRYARENRIPFFGICLGMQMAVVEFARNVCGIDDCFSSEFKEDAANPVIHIMENQKKVTRKGGTMRLGAYPCQLVEGTLARRIFGTGDVEERHRHRYEFNNAYQERLEKGGLVISGVYRDVGLVEIVEIEDHPWFLGCQFHPEFRSRPMEPHPLFESFVGASLKHHGEA</sequence>
<dbReference type="EC" id="6.3.4.2" evidence="1"/>
<dbReference type="EMBL" id="CP000142">
    <property type="protein sequence ID" value="ABA89186.1"/>
    <property type="molecule type" value="Genomic_DNA"/>
</dbReference>
<dbReference type="RefSeq" id="WP_011341691.1">
    <property type="nucleotide sequence ID" value="NC_007498.2"/>
</dbReference>
<dbReference type="SMR" id="Q3A371"/>
<dbReference type="STRING" id="338963.Pcar_1945"/>
<dbReference type="KEGG" id="pca:Pcar_1945"/>
<dbReference type="eggNOG" id="COG0504">
    <property type="taxonomic scope" value="Bacteria"/>
</dbReference>
<dbReference type="HOGENOM" id="CLU_011675_5_0_7"/>
<dbReference type="OrthoDB" id="9801107at2"/>
<dbReference type="UniPathway" id="UPA00159">
    <property type="reaction ID" value="UER00277"/>
</dbReference>
<dbReference type="Proteomes" id="UP000002534">
    <property type="component" value="Chromosome"/>
</dbReference>
<dbReference type="GO" id="GO:0005829">
    <property type="term" value="C:cytosol"/>
    <property type="evidence" value="ECO:0007669"/>
    <property type="project" value="TreeGrafter"/>
</dbReference>
<dbReference type="GO" id="GO:0005524">
    <property type="term" value="F:ATP binding"/>
    <property type="evidence" value="ECO:0007669"/>
    <property type="project" value="UniProtKB-KW"/>
</dbReference>
<dbReference type="GO" id="GO:0003883">
    <property type="term" value="F:CTP synthase activity"/>
    <property type="evidence" value="ECO:0007669"/>
    <property type="project" value="UniProtKB-UniRule"/>
</dbReference>
<dbReference type="GO" id="GO:0004359">
    <property type="term" value="F:glutaminase activity"/>
    <property type="evidence" value="ECO:0007669"/>
    <property type="project" value="RHEA"/>
</dbReference>
<dbReference type="GO" id="GO:0042802">
    <property type="term" value="F:identical protein binding"/>
    <property type="evidence" value="ECO:0007669"/>
    <property type="project" value="TreeGrafter"/>
</dbReference>
<dbReference type="GO" id="GO:0046872">
    <property type="term" value="F:metal ion binding"/>
    <property type="evidence" value="ECO:0007669"/>
    <property type="project" value="UniProtKB-KW"/>
</dbReference>
<dbReference type="GO" id="GO:0044210">
    <property type="term" value="P:'de novo' CTP biosynthetic process"/>
    <property type="evidence" value="ECO:0007669"/>
    <property type="project" value="UniProtKB-UniRule"/>
</dbReference>
<dbReference type="GO" id="GO:0019856">
    <property type="term" value="P:pyrimidine nucleobase biosynthetic process"/>
    <property type="evidence" value="ECO:0007669"/>
    <property type="project" value="TreeGrafter"/>
</dbReference>
<dbReference type="CDD" id="cd03113">
    <property type="entry name" value="CTPS_N"/>
    <property type="match status" value="1"/>
</dbReference>
<dbReference type="CDD" id="cd01746">
    <property type="entry name" value="GATase1_CTP_Synthase"/>
    <property type="match status" value="1"/>
</dbReference>
<dbReference type="FunFam" id="3.40.50.300:FF:000009">
    <property type="entry name" value="CTP synthase"/>
    <property type="match status" value="1"/>
</dbReference>
<dbReference type="FunFam" id="3.40.50.880:FF:000002">
    <property type="entry name" value="CTP synthase"/>
    <property type="match status" value="1"/>
</dbReference>
<dbReference type="Gene3D" id="3.40.50.880">
    <property type="match status" value="1"/>
</dbReference>
<dbReference type="Gene3D" id="3.40.50.300">
    <property type="entry name" value="P-loop containing nucleotide triphosphate hydrolases"/>
    <property type="match status" value="1"/>
</dbReference>
<dbReference type="HAMAP" id="MF_01227">
    <property type="entry name" value="PyrG"/>
    <property type="match status" value="1"/>
</dbReference>
<dbReference type="InterPro" id="IPR029062">
    <property type="entry name" value="Class_I_gatase-like"/>
</dbReference>
<dbReference type="InterPro" id="IPR004468">
    <property type="entry name" value="CTP_synthase"/>
</dbReference>
<dbReference type="InterPro" id="IPR017456">
    <property type="entry name" value="CTP_synthase_N"/>
</dbReference>
<dbReference type="InterPro" id="IPR017926">
    <property type="entry name" value="GATASE"/>
</dbReference>
<dbReference type="InterPro" id="IPR033828">
    <property type="entry name" value="GATase1_CTP_Synthase"/>
</dbReference>
<dbReference type="InterPro" id="IPR027417">
    <property type="entry name" value="P-loop_NTPase"/>
</dbReference>
<dbReference type="NCBIfam" id="NF003792">
    <property type="entry name" value="PRK05380.1"/>
    <property type="match status" value="1"/>
</dbReference>
<dbReference type="NCBIfam" id="TIGR00337">
    <property type="entry name" value="PyrG"/>
    <property type="match status" value="1"/>
</dbReference>
<dbReference type="PANTHER" id="PTHR11550">
    <property type="entry name" value="CTP SYNTHASE"/>
    <property type="match status" value="1"/>
</dbReference>
<dbReference type="PANTHER" id="PTHR11550:SF0">
    <property type="entry name" value="CTP SYNTHASE-RELATED"/>
    <property type="match status" value="1"/>
</dbReference>
<dbReference type="Pfam" id="PF06418">
    <property type="entry name" value="CTP_synth_N"/>
    <property type="match status" value="1"/>
</dbReference>
<dbReference type="Pfam" id="PF00117">
    <property type="entry name" value="GATase"/>
    <property type="match status" value="1"/>
</dbReference>
<dbReference type="SUPFAM" id="SSF52317">
    <property type="entry name" value="Class I glutamine amidotransferase-like"/>
    <property type="match status" value="1"/>
</dbReference>
<dbReference type="SUPFAM" id="SSF52540">
    <property type="entry name" value="P-loop containing nucleoside triphosphate hydrolases"/>
    <property type="match status" value="1"/>
</dbReference>
<dbReference type="PROSITE" id="PS51273">
    <property type="entry name" value="GATASE_TYPE_1"/>
    <property type="match status" value="1"/>
</dbReference>
<organism>
    <name type="scientific">Syntrophotalea carbinolica (strain DSM 2380 / NBRC 103641 / GraBd1)</name>
    <name type="common">Pelobacter carbinolicus</name>
    <dbReference type="NCBI Taxonomy" id="338963"/>
    <lineage>
        <taxon>Bacteria</taxon>
        <taxon>Pseudomonadati</taxon>
        <taxon>Thermodesulfobacteriota</taxon>
        <taxon>Desulfuromonadia</taxon>
        <taxon>Desulfuromonadales</taxon>
        <taxon>Syntrophotaleaceae</taxon>
        <taxon>Syntrophotalea</taxon>
    </lineage>
</organism>
<proteinExistence type="inferred from homology"/>
<accession>Q3A371</accession>
<name>PYRG_SYNC1</name>